<proteinExistence type="inferred from homology"/>
<dbReference type="EMBL" id="CP000969">
    <property type="protein sequence ID" value="ACB08434.1"/>
    <property type="molecule type" value="Genomic_DNA"/>
</dbReference>
<dbReference type="RefSeq" id="WP_012310302.1">
    <property type="nucleotide sequence ID" value="NC_010483.1"/>
</dbReference>
<dbReference type="BMRB" id="B1LCH6"/>
<dbReference type="SMR" id="B1LCH6"/>
<dbReference type="KEGG" id="trq:TRQ2_0072"/>
<dbReference type="HOGENOM" id="CLU_089475_6_5_0"/>
<dbReference type="Proteomes" id="UP000001687">
    <property type="component" value="Chromosome"/>
</dbReference>
<dbReference type="GO" id="GO:0005829">
    <property type="term" value="C:cytosol"/>
    <property type="evidence" value="ECO:0007669"/>
    <property type="project" value="TreeGrafter"/>
</dbReference>
<dbReference type="GO" id="GO:0043024">
    <property type="term" value="F:ribosomal small subunit binding"/>
    <property type="evidence" value="ECO:0007669"/>
    <property type="project" value="TreeGrafter"/>
</dbReference>
<dbReference type="GO" id="GO:0030490">
    <property type="term" value="P:maturation of SSU-rRNA"/>
    <property type="evidence" value="ECO:0007669"/>
    <property type="project" value="UniProtKB-UniRule"/>
</dbReference>
<dbReference type="Gene3D" id="3.30.300.20">
    <property type="match status" value="1"/>
</dbReference>
<dbReference type="HAMAP" id="MF_00003">
    <property type="entry name" value="RbfA"/>
    <property type="match status" value="1"/>
</dbReference>
<dbReference type="InterPro" id="IPR015946">
    <property type="entry name" value="KH_dom-like_a/b"/>
</dbReference>
<dbReference type="InterPro" id="IPR000238">
    <property type="entry name" value="RbfA"/>
</dbReference>
<dbReference type="InterPro" id="IPR023799">
    <property type="entry name" value="RbfA_dom_sf"/>
</dbReference>
<dbReference type="InterPro" id="IPR020053">
    <property type="entry name" value="Ribosome-bd_factorA_CS"/>
</dbReference>
<dbReference type="NCBIfam" id="TIGR00082">
    <property type="entry name" value="rbfA"/>
    <property type="match status" value="1"/>
</dbReference>
<dbReference type="PANTHER" id="PTHR33515">
    <property type="entry name" value="RIBOSOME-BINDING FACTOR A, CHLOROPLASTIC-RELATED"/>
    <property type="match status" value="1"/>
</dbReference>
<dbReference type="PANTHER" id="PTHR33515:SF1">
    <property type="entry name" value="RIBOSOME-BINDING FACTOR A, CHLOROPLASTIC-RELATED"/>
    <property type="match status" value="1"/>
</dbReference>
<dbReference type="Pfam" id="PF02033">
    <property type="entry name" value="RBFA"/>
    <property type="match status" value="1"/>
</dbReference>
<dbReference type="SUPFAM" id="SSF89919">
    <property type="entry name" value="Ribosome-binding factor A, RbfA"/>
    <property type="match status" value="1"/>
</dbReference>
<dbReference type="PROSITE" id="PS01319">
    <property type="entry name" value="RBFA"/>
    <property type="match status" value="1"/>
</dbReference>
<organism>
    <name type="scientific">Thermotoga sp. (strain RQ2)</name>
    <dbReference type="NCBI Taxonomy" id="126740"/>
    <lineage>
        <taxon>Bacteria</taxon>
        <taxon>Thermotogati</taxon>
        <taxon>Thermotogota</taxon>
        <taxon>Thermotogae</taxon>
        <taxon>Thermotogales</taxon>
        <taxon>Thermotogaceae</taxon>
        <taxon>Thermotoga</taxon>
    </lineage>
</organism>
<name>RBFA_THESQ</name>
<feature type="chain" id="PRO_1000088939" description="Ribosome-binding factor A">
    <location>
        <begin position="1"/>
        <end position="131"/>
    </location>
</feature>
<reference key="1">
    <citation type="journal article" date="2011" name="J. Bacteriol.">
        <title>Genome sequence of Thermotoga sp. strain RQ2, a hyperthermophilic bacterium isolated from a geothermally heated region of the seafloor near Ribeira Quente, the Azores.</title>
        <authorList>
            <person name="Swithers K.S."/>
            <person name="DiPippo J.L."/>
            <person name="Bruce D.C."/>
            <person name="Detter C."/>
            <person name="Tapia R."/>
            <person name="Han S."/>
            <person name="Saunders E."/>
            <person name="Goodwin L.A."/>
            <person name="Han J."/>
            <person name="Woyke T."/>
            <person name="Pitluck S."/>
            <person name="Pennacchio L."/>
            <person name="Nolan M."/>
            <person name="Mikhailova N."/>
            <person name="Lykidis A."/>
            <person name="Land M.L."/>
            <person name="Brettin T."/>
            <person name="Stetter K.O."/>
            <person name="Nelson K.E."/>
            <person name="Gogarten J.P."/>
            <person name="Noll K.M."/>
        </authorList>
    </citation>
    <scope>NUCLEOTIDE SEQUENCE [LARGE SCALE GENOMIC DNA]</scope>
    <source>
        <strain>RQ2</strain>
    </source>
</reference>
<protein>
    <recommendedName>
        <fullName evidence="1">Ribosome-binding factor A</fullName>
    </recommendedName>
</protein>
<gene>
    <name evidence="1" type="primary">rbfA</name>
    <name type="ordered locus">TRQ2_0072</name>
</gene>
<sequence>MNPAYRKAMLESEIQKLLMEALQQLRDPRLKKDFVTFSRVELSKDKRYADVYVSFLGTPEERKETVEILNRAKGFFRTFIAKNLRLYVAPEIRFYEDKGIEASVKVHQLLVQLGYDPLKDKEKKEEEKKEE</sequence>
<comment type="function">
    <text evidence="1">One of several proteins that assist in the late maturation steps of the functional core of the 30S ribosomal subunit. Associates with free 30S ribosomal subunits (but not with 30S subunits that are part of 70S ribosomes or polysomes). Required for efficient processing of 16S rRNA. May interact with the 5'-terminal helix region of 16S rRNA.</text>
</comment>
<comment type="subunit">
    <text evidence="1">Monomer. Binds 30S ribosomal subunits, but not 50S ribosomal subunits or 70S ribosomes.</text>
</comment>
<comment type="subcellular location">
    <subcellularLocation>
        <location evidence="1">Cytoplasm</location>
    </subcellularLocation>
</comment>
<comment type="similarity">
    <text evidence="1">Belongs to the RbfA family.</text>
</comment>
<evidence type="ECO:0000255" key="1">
    <source>
        <dbReference type="HAMAP-Rule" id="MF_00003"/>
    </source>
</evidence>
<keyword id="KW-0963">Cytoplasm</keyword>
<keyword id="KW-0690">Ribosome biogenesis</keyword>
<accession>B1LCH6</accession>